<protein>
    <recommendedName>
        <fullName>Toxin TxP-I</fullName>
    </recommendedName>
    <alternativeName>
        <fullName>Tox34</fullName>
    </alternativeName>
</protein>
<name>TXP1_PYETR</name>
<organism>
    <name type="scientific">Pyemotes tritici</name>
    <name type="common">Straw itch mite</name>
    <name type="synonym">Acarus tritici</name>
    <dbReference type="NCBI Taxonomy" id="6950"/>
    <lineage>
        <taxon>Eukaryota</taxon>
        <taxon>Metazoa</taxon>
        <taxon>Ecdysozoa</taxon>
        <taxon>Arthropoda</taxon>
        <taxon>Chelicerata</taxon>
        <taxon>Arachnida</taxon>
        <taxon>Acari</taxon>
        <taxon>Acariformes</taxon>
        <taxon>Trombidiformes</taxon>
        <taxon>Prostigmata</taxon>
        <taxon>Eleutherengona</taxon>
        <taxon>Heterostigmata</taxon>
        <taxon>Pyemotoidea</taxon>
        <taxon>Pyemotidae</taxon>
        <taxon>Pyemotes</taxon>
    </lineage>
</organism>
<proteinExistence type="evidence at protein level"/>
<comment type="function">
    <text>Part of a complex mixture of neurotoxins which P.tritici utilizes to capture prey. It has contracting-paralyzing activity in insects.</text>
</comment>
<comment type="subcellular location">
    <subcellularLocation>
        <location>Secreted</location>
    </subcellularLocation>
</comment>
<comment type="tissue specificity">
    <text>Posterior glands which appear to be connected with the stylet through a series of ducts.</text>
</comment>
<comment type="PTM">
    <text>Contains several disulfide bonds.</text>
</comment>
<comment type="sequence caution" evidence="3">
    <conflict type="erroneous initiation">
        <sequence resource="EMBL-CDS" id="AAA29802"/>
    </conflict>
</comment>
<sequence length="279" mass="31676">MNLFFLFIIPTILAVKPFRSFNNISLIDNGNVESVRAVVIDYCDIRHPNNLCKKHFEIDSYWNDDTDCFTNIGCKVYGGFDIIGGHTPKVGTVCRLKKGENKFGYCNSKGNCVERDFKESFGISIKIKGISNKGDDEPACPQYKNTWINYGKCNEPYYCGTNHGLFYANKRKLDYFPTDGEKCNSNNIPYAVCYLGRCHTTGGFFSEFGTIVKNVEIVTLSDGKNSSRRGKHKNLPTSKVFDSYSIYDIDPKNWKIEDDDKDVTVHENTLDPKSDSRLC</sequence>
<accession>P20798</accession>
<reference key="1">
    <citation type="journal article" date="1991" name="Nature">
        <title>Insect paralysis by baculovirus-mediated expression of a mite neurotoxin gene.</title>
        <authorList>
            <person name="Tomalski M.D."/>
            <person name="Miller L.K."/>
        </authorList>
    </citation>
    <scope>NUCLEOTIDE SEQUENCE [MRNA]</scope>
</reference>
<reference key="2">
    <citation type="journal article" date="1989" name="Toxicon">
        <title>Purification and characterization of insect toxins derived from the mite, Pyemotes tritici.</title>
        <authorList>
            <person name="Tomalski M.D."/>
            <person name="Kutney R."/>
            <person name="Bruce W.A."/>
            <person name="Brown M.R."/>
            <person name="Blum M.S."/>
            <person name="Travis J."/>
        </authorList>
    </citation>
    <scope>PROTEIN SEQUENCE OF 28-48</scope>
</reference>
<keyword id="KW-0903">Direct protein sequencing</keyword>
<keyword id="KW-1015">Disulfide bond</keyword>
<keyword id="KW-0528">Neurotoxin</keyword>
<keyword id="KW-0964">Secreted</keyword>
<keyword id="KW-0732">Signal</keyword>
<keyword id="KW-0800">Toxin</keyword>
<dbReference type="EMBL" id="M68863">
    <property type="protein sequence ID" value="AAA29802.1"/>
    <property type="status" value="ALT_INIT"/>
    <property type="molecule type" value="mRNA"/>
</dbReference>
<dbReference type="PIR" id="S16950">
    <property type="entry name" value="S16950"/>
</dbReference>
<dbReference type="GO" id="GO:0005576">
    <property type="term" value="C:extracellular region"/>
    <property type="evidence" value="ECO:0007669"/>
    <property type="project" value="UniProtKB-SubCell"/>
</dbReference>
<dbReference type="GO" id="GO:0090729">
    <property type="term" value="F:toxin activity"/>
    <property type="evidence" value="ECO:0007669"/>
    <property type="project" value="UniProtKB-KW"/>
</dbReference>
<dbReference type="InterPro" id="IPR016329">
    <property type="entry name" value="Neurotoxin_TxP-I"/>
</dbReference>
<dbReference type="PIRSF" id="PIRSF001883">
    <property type="entry name" value="Neurotoxin_TxP-I"/>
    <property type="match status" value="1"/>
</dbReference>
<feature type="signal peptide" evidence="1">
    <location>
        <begin position="1"/>
        <end position="14"/>
    </location>
</feature>
<feature type="propeptide" id="PRO_0000035170" evidence="2">
    <location>
        <begin position="15"/>
        <end position="27"/>
    </location>
</feature>
<feature type="chain" id="PRO_0000035171" description="Toxin TxP-I">
    <location>
        <begin position="28"/>
        <end position="279"/>
    </location>
</feature>
<evidence type="ECO:0000255" key="1"/>
<evidence type="ECO:0000269" key="2">
    <source>
    </source>
</evidence>
<evidence type="ECO:0000305" key="3"/>